<dbReference type="EMBL" id="CP000934">
    <property type="protein sequence ID" value="ACE83979.1"/>
    <property type="molecule type" value="Genomic_DNA"/>
</dbReference>
<dbReference type="RefSeq" id="WP_012486120.1">
    <property type="nucleotide sequence ID" value="NC_010995.1"/>
</dbReference>
<dbReference type="SMR" id="B3PI99"/>
<dbReference type="STRING" id="498211.CJA_0439"/>
<dbReference type="KEGG" id="cja:CJA_0439"/>
<dbReference type="eggNOG" id="COG0184">
    <property type="taxonomic scope" value="Bacteria"/>
</dbReference>
<dbReference type="HOGENOM" id="CLU_148518_0_0_6"/>
<dbReference type="OrthoDB" id="9799262at2"/>
<dbReference type="Proteomes" id="UP000001036">
    <property type="component" value="Chromosome"/>
</dbReference>
<dbReference type="GO" id="GO:0022627">
    <property type="term" value="C:cytosolic small ribosomal subunit"/>
    <property type="evidence" value="ECO:0007669"/>
    <property type="project" value="TreeGrafter"/>
</dbReference>
<dbReference type="GO" id="GO:0019843">
    <property type="term" value="F:rRNA binding"/>
    <property type="evidence" value="ECO:0007669"/>
    <property type="project" value="UniProtKB-UniRule"/>
</dbReference>
<dbReference type="GO" id="GO:0003735">
    <property type="term" value="F:structural constituent of ribosome"/>
    <property type="evidence" value="ECO:0007669"/>
    <property type="project" value="InterPro"/>
</dbReference>
<dbReference type="GO" id="GO:0006412">
    <property type="term" value="P:translation"/>
    <property type="evidence" value="ECO:0007669"/>
    <property type="project" value="UniProtKB-UniRule"/>
</dbReference>
<dbReference type="CDD" id="cd00353">
    <property type="entry name" value="Ribosomal_S15p_S13e"/>
    <property type="match status" value="1"/>
</dbReference>
<dbReference type="FunFam" id="1.10.287.10:FF:000002">
    <property type="entry name" value="30S ribosomal protein S15"/>
    <property type="match status" value="1"/>
</dbReference>
<dbReference type="Gene3D" id="6.10.250.3130">
    <property type="match status" value="1"/>
</dbReference>
<dbReference type="Gene3D" id="1.10.287.10">
    <property type="entry name" value="S15/NS1, RNA-binding"/>
    <property type="match status" value="1"/>
</dbReference>
<dbReference type="HAMAP" id="MF_01343_B">
    <property type="entry name" value="Ribosomal_uS15_B"/>
    <property type="match status" value="1"/>
</dbReference>
<dbReference type="InterPro" id="IPR000589">
    <property type="entry name" value="Ribosomal_uS15"/>
</dbReference>
<dbReference type="InterPro" id="IPR005290">
    <property type="entry name" value="Ribosomal_uS15_bac-type"/>
</dbReference>
<dbReference type="InterPro" id="IPR009068">
    <property type="entry name" value="uS15_NS1_RNA-bd_sf"/>
</dbReference>
<dbReference type="NCBIfam" id="TIGR00952">
    <property type="entry name" value="S15_bact"/>
    <property type="match status" value="1"/>
</dbReference>
<dbReference type="PANTHER" id="PTHR23321">
    <property type="entry name" value="RIBOSOMAL PROTEIN S15, BACTERIAL AND ORGANELLAR"/>
    <property type="match status" value="1"/>
</dbReference>
<dbReference type="PANTHER" id="PTHR23321:SF26">
    <property type="entry name" value="SMALL RIBOSOMAL SUBUNIT PROTEIN US15M"/>
    <property type="match status" value="1"/>
</dbReference>
<dbReference type="Pfam" id="PF00312">
    <property type="entry name" value="Ribosomal_S15"/>
    <property type="match status" value="1"/>
</dbReference>
<dbReference type="SMART" id="SM01387">
    <property type="entry name" value="Ribosomal_S15"/>
    <property type="match status" value="1"/>
</dbReference>
<dbReference type="SUPFAM" id="SSF47060">
    <property type="entry name" value="S15/NS1 RNA-binding domain"/>
    <property type="match status" value="1"/>
</dbReference>
<dbReference type="PROSITE" id="PS00362">
    <property type="entry name" value="RIBOSOMAL_S15"/>
    <property type="match status" value="1"/>
</dbReference>
<gene>
    <name evidence="1" type="primary">rpsO</name>
    <name type="ordered locus">CJA_0439</name>
</gene>
<name>RS15_CELJU</name>
<protein>
    <recommendedName>
        <fullName evidence="1">Small ribosomal subunit protein uS15</fullName>
    </recommendedName>
    <alternativeName>
        <fullName evidence="2">30S ribosomal protein S15</fullName>
    </alternativeName>
</protein>
<accession>B3PI99</accession>
<sequence length="89" mass="9920">MALSAAEKAGIVAKYQKVAGDTGSPEVQVALLTANINKLQNHFVAHKADHHSRRGLIRMVNSRRKLLDYLKDKDAPRYSALIQDLGLRR</sequence>
<reference key="1">
    <citation type="journal article" date="2008" name="J. Bacteriol.">
        <title>Insights into plant cell wall degradation from the genome sequence of the soil bacterium Cellvibrio japonicus.</title>
        <authorList>
            <person name="DeBoy R.T."/>
            <person name="Mongodin E.F."/>
            <person name="Fouts D.E."/>
            <person name="Tailford L.E."/>
            <person name="Khouri H."/>
            <person name="Emerson J.B."/>
            <person name="Mohamoud Y."/>
            <person name="Watkins K."/>
            <person name="Henrissat B."/>
            <person name="Gilbert H.J."/>
            <person name="Nelson K.E."/>
        </authorList>
    </citation>
    <scope>NUCLEOTIDE SEQUENCE [LARGE SCALE GENOMIC DNA]</scope>
    <source>
        <strain>Ueda107</strain>
    </source>
</reference>
<comment type="function">
    <text evidence="1">One of the primary rRNA binding proteins, it binds directly to 16S rRNA where it helps nucleate assembly of the platform of the 30S subunit by binding and bridging several RNA helices of the 16S rRNA.</text>
</comment>
<comment type="function">
    <text evidence="1">Forms an intersubunit bridge (bridge B4) with the 23S rRNA of the 50S subunit in the ribosome.</text>
</comment>
<comment type="subunit">
    <text evidence="1">Part of the 30S ribosomal subunit. Forms a bridge to the 50S subunit in the 70S ribosome, contacting the 23S rRNA.</text>
</comment>
<comment type="similarity">
    <text evidence="1">Belongs to the universal ribosomal protein uS15 family.</text>
</comment>
<organism>
    <name type="scientific">Cellvibrio japonicus (strain Ueda107)</name>
    <name type="common">Pseudomonas fluorescens subsp. cellulosa</name>
    <dbReference type="NCBI Taxonomy" id="498211"/>
    <lineage>
        <taxon>Bacteria</taxon>
        <taxon>Pseudomonadati</taxon>
        <taxon>Pseudomonadota</taxon>
        <taxon>Gammaproteobacteria</taxon>
        <taxon>Cellvibrionales</taxon>
        <taxon>Cellvibrionaceae</taxon>
        <taxon>Cellvibrio</taxon>
    </lineage>
</organism>
<evidence type="ECO:0000255" key="1">
    <source>
        <dbReference type="HAMAP-Rule" id="MF_01343"/>
    </source>
</evidence>
<evidence type="ECO:0000305" key="2"/>
<proteinExistence type="inferred from homology"/>
<keyword id="KW-1185">Reference proteome</keyword>
<keyword id="KW-0687">Ribonucleoprotein</keyword>
<keyword id="KW-0689">Ribosomal protein</keyword>
<keyword id="KW-0694">RNA-binding</keyword>
<keyword id="KW-0699">rRNA-binding</keyword>
<feature type="chain" id="PRO_1000143089" description="Small ribosomal subunit protein uS15">
    <location>
        <begin position="1"/>
        <end position="89"/>
    </location>
</feature>